<gene>
    <name type="primary">PSAH</name>
</gene>
<keyword id="KW-0002">3D-structure</keyword>
<keyword id="KW-0150">Chloroplast</keyword>
<keyword id="KW-0903">Direct protein sequencing</keyword>
<keyword id="KW-0472">Membrane</keyword>
<keyword id="KW-0602">Photosynthesis</keyword>
<keyword id="KW-0603">Photosystem I</keyword>
<keyword id="KW-0934">Plastid</keyword>
<keyword id="KW-0793">Thylakoid</keyword>
<keyword id="KW-0809">Transit peptide</keyword>
<keyword id="KW-0812">Transmembrane</keyword>
<keyword id="KW-1133">Transmembrane helix</keyword>
<organism>
    <name type="scientific">Hordeum vulgare</name>
    <name type="common">Barley</name>
    <dbReference type="NCBI Taxonomy" id="4513"/>
    <lineage>
        <taxon>Eukaryota</taxon>
        <taxon>Viridiplantae</taxon>
        <taxon>Streptophyta</taxon>
        <taxon>Embryophyta</taxon>
        <taxon>Tracheophyta</taxon>
        <taxon>Spermatophyta</taxon>
        <taxon>Magnoliopsida</taxon>
        <taxon>Liliopsida</taxon>
        <taxon>Poales</taxon>
        <taxon>Poaceae</taxon>
        <taxon>BOP clade</taxon>
        <taxon>Pooideae</taxon>
        <taxon>Triticodae</taxon>
        <taxon>Triticeae</taxon>
        <taxon>Hordeinae</taxon>
        <taxon>Hordeum</taxon>
    </lineage>
</organism>
<feature type="transit peptide" description="Chloroplast">
    <location>
        <begin position="1"/>
        <end position="48"/>
    </location>
</feature>
<feature type="chain" id="PRO_0000029416" description="Photosystem I reaction center subunit VI, chloroplastic">
    <location>
        <begin position="49"/>
        <end position="143"/>
    </location>
</feature>
<feature type="transmembrane region" description="Helical" evidence="1">
    <location>
        <begin position="100"/>
        <end position="120"/>
    </location>
</feature>
<feature type="helix" evidence="3">
    <location>
        <begin position="84"/>
        <end position="91"/>
    </location>
</feature>
<feature type="helix" evidence="3">
    <location>
        <begin position="93"/>
        <end position="95"/>
    </location>
</feature>
<feature type="helix" evidence="3">
    <location>
        <begin position="98"/>
        <end position="118"/>
    </location>
</feature>
<feature type="turn" evidence="3">
    <location>
        <begin position="122"/>
        <end position="124"/>
    </location>
</feature>
<feature type="turn" evidence="3">
    <location>
        <begin position="126"/>
        <end position="128"/>
    </location>
</feature>
<comment type="function">
    <text>Possible role could be the docking of the LHC I antenna complex to the core complex.</text>
</comment>
<comment type="subcellular location">
    <subcellularLocation>
        <location>Plastid</location>
        <location>Chloroplast thylakoid membrane</location>
        <topology>Single-pass membrane protein</topology>
    </subcellularLocation>
</comment>
<comment type="similarity">
    <text evidence="2">Belongs to the psaH family.</text>
</comment>
<accession>P20143</accession>
<evidence type="ECO:0000255" key="1"/>
<evidence type="ECO:0000305" key="2"/>
<evidence type="ECO:0007829" key="3">
    <source>
        <dbReference type="PDB" id="7EW6"/>
    </source>
</evidence>
<dbReference type="EMBL" id="X16092">
    <property type="protein sequence ID" value="CAA34218.1"/>
    <property type="molecule type" value="mRNA"/>
</dbReference>
<dbReference type="PIR" id="S05012">
    <property type="entry name" value="S05012"/>
</dbReference>
<dbReference type="PDB" id="7EW6">
    <property type="method" value="EM"/>
    <property type="resolution" value="3.40 A"/>
    <property type="chains" value="H=1-143"/>
</dbReference>
<dbReference type="PDB" id="7EWK">
    <property type="method" value="EM"/>
    <property type="resolution" value="3.88 A"/>
    <property type="chains" value="H=83-143"/>
</dbReference>
<dbReference type="PDB" id="7F9O">
    <property type="method" value="EM"/>
    <property type="resolution" value="4.50 A"/>
    <property type="chains" value="H/k=1-143"/>
</dbReference>
<dbReference type="PDBsum" id="7EW6"/>
<dbReference type="PDBsum" id="7EWK"/>
<dbReference type="PDBsum" id="7F9O"/>
<dbReference type="EMDB" id="EMD-31348"/>
<dbReference type="EMDB" id="EMD-31350"/>
<dbReference type="EMDB" id="EMD-31498"/>
<dbReference type="SMR" id="P20143"/>
<dbReference type="ExpressionAtlas" id="P20143">
    <property type="expression patterns" value="baseline and differential"/>
</dbReference>
<dbReference type="GO" id="GO:0009535">
    <property type="term" value="C:chloroplast thylakoid membrane"/>
    <property type="evidence" value="ECO:0007669"/>
    <property type="project" value="UniProtKB-SubCell"/>
</dbReference>
<dbReference type="GO" id="GO:0009538">
    <property type="term" value="C:photosystem I reaction center"/>
    <property type="evidence" value="ECO:0007669"/>
    <property type="project" value="InterPro"/>
</dbReference>
<dbReference type="GO" id="GO:0015979">
    <property type="term" value="P:photosynthesis"/>
    <property type="evidence" value="ECO:0007669"/>
    <property type="project" value="UniProtKB-KW"/>
</dbReference>
<dbReference type="FunFam" id="1.20.5.220:FF:000003">
    <property type="entry name" value="Photosystem I reaction center subunit VI"/>
    <property type="match status" value="1"/>
</dbReference>
<dbReference type="Gene3D" id="1.20.5.220">
    <property type="match status" value="1"/>
</dbReference>
<dbReference type="InterPro" id="IPR004928">
    <property type="entry name" value="PSI_PsaH"/>
</dbReference>
<dbReference type="PANTHER" id="PTHR34787">
    <property type="entry name" value="PHOTOSYSTEM I REACTION CENTER SUBUNIT VI-2, CHLOROPLASTIC"/>
    <property type="match status" value="1"/>
</dbReference>
<dbReference type="PANTHER" id="PTHR34787:SF1">
    <property type="entry name" value="PHOTOSYSTEM I REACTION CENTER SUBUNIT VI-2, CHLOROPLASTIC"/>
    <property type="match status" value="1"/>
</dbReference>
<dbReference type="Pfam" id="PF03244">
    <property type="entry name" value="PSI_PsaH"/>
    <property type="match status" value="1"/>
</dbReference>
<sequence length="143" mass="14882">MASLVAVQPAAVKGLSGSSISGRKLAVRPSSAAVSRSTRRARGAAVVAKYGEKSVYFDLDDIANTTGQWDLYGSDAPSPYNGLQSKFFNTFAAPFTKRGLLLKFLLIGGGSLVAYVSASASPDLLPIKKGPQLPPTPGPRGKI</sequence>
<reference key="1">
    <citation type="journal article" date="1989" name="FEBS Lett.">
        <title>A cDNA clone encoding the precursor for a 10.2 kDa photosystem I polypeptide of barley.</title>
        <authorList>
            <person name="Okkels J.S."/>
            <person name="Scheller H.V."/>
            <person name="Jepsen L.B."/>
            <person name="Moeller B.L."/>
        </authorList>
    </citation>
    <scope>NUCLEOTIDE SEQUENCE [MRNA]</scope>
    <scope>PARTIAL PROTEIN SEQUENCE</scope>
</reference>
<protein>
    <recommendedName>
        <fullName>Photosystem I reaction center subunit VI, chloroplastic</fullName>
        <shortName>PSI-H</shortName>
    </recommendedName>
    <alternativeName>
        <fullName>Light-harvesting complex I 11 kDa protein</fullName>
    </alternativeName>
</protein>
<proteinExistence type="evidence at protein level"/>
<name>PSAH_HORVU</name>